<organism>
    <name type="scientific">Rattus norvegicus</name>
    <name type="common">Rat</name>
    <dbReference type="NCBI Taxonomy" id="10116"/>
    <lineage>
        <taxon>Eukaryota</taxon>
        <taxon>Metazoa</taxon>
        <taxon>Chordata</taxon>
        <taxon>Craniata</taxon>
        <taxon>Vertebrata</taxon>
        <taxon>Euteleostomi</taxon>
        <taxon>Mammalia</taxon>
        <taxon>Eutheria</taxon>
        <taxon>Euarchontoglires</taxon>
        <taxon>Glires</taxon>
        <taxon>Rodentia</taxon>
        <taxon>Myomorpha</taxon>
        <taxon>Muroidea</taxon>
        <taxon>Muridae</taxon>
        <taxon>Murinae</taxon>
        <taxon>Rattus</taxon>
    </lineage>
</organism>
<gene>
    <name type="primary">Prm1</name>
    <name type="synonym">Prm-1</name>
</gene>
<protein>
    <recommendedName>
        <fullName>Sperm protamine P1</fullName>
    </recommendedName>
    <alternativeName>
        <fullName>Cysteine-rich protamine</fullName>
    </alternativeName>
</protein>
<sequence>MARYRCCRSKSRSRCRRRRRRCRRRRRRCCRRRRRRCCRRRRSYTFRCKRY</sequence>
<name>HSP1_RAT</name>
<accession>P10118</accession>
<accession>A0JN03</accession>
<feature type="initiator methionine" description="Removed" evidence="3 4">
    <location>
        <position position="1"/>
    </location>
</feature>
<feature type="chain" id="PRO_0000191549" description="Sperm protamine P1">
    <location>
        <begin position="2"/>
        <end position="51"/>
    </location>
</feature>
<feature type="disulfide bond" description="Interchain (with C-22)" evidence="2">
    <location>
        <position position="6"/>
    </location>
</feature>
<feature type="disulfide bond" evidence="2">
    <location>
        <begin position="7"/>
        <end position="15"/>
    </location>
</feature>
<feature type="disulfide bond" description="Interchain (with C-6)" evidence="2">
    <location>
        <position position="22"/>
    </location>
</feature>
<feature type="disulfide bond" description="Interchain (with C-37)" evidence="2">
    <location>
        <position position="37"/>
    </location>
</feature>
<feature type="disulfide bond" evidence="2">
    <location>
        <begin position="38"/>
        <end position="48"/>
    </location>
</feature>
<keyword id="KW-0158">Chromosome</keyword>
<keyword id="KW-0217">Developmental protein</keyword>
<keyword id="KW-0221">Differentiation</keyword>
<keyword id="KW-0903">Direct protein sequencing</keyword>
<keyword id="KW-1015">Disulfide bond</keyword>
<keyword id="KW-0226">DNA condensation</keyword>
<keyword id="KW-0238">DNA-binding</keyword>
<keyword id="KW-0544">Nucleosome core</keyword>
<keyword id="KW-0539">Nucleus</keyword>
<keyword id="KW-0597">Phosphoprotein</keyword>
<keyword id="KW-1185">Reference proteome</keyword>
<keyword id="KW-0744">Spermatogenesis</keyword>
<proteinExistence type="evidence at protein level"/>
<comment type="function">
    <text>Protamines substitute for histones in the chromatin of sperm during the haploid phase of spermatogenesis. They compact sperm DNA into a highly condensed, stable and inactive complex.</text>
</comment>
<comment type="subunit">
    <text evidence="1">Cross-linked by interchain disulfide bonds around the DNA-helix.</text>
</comment>
<comment type="subcellular location">
    <subcellularLocation>
        <location>Nucleus</location>
    </subcellularLocation>
    <subcellularLocation>
        <location>Chromosome</location>
    </subcellularLocation>
</comment>
<comment type="tissue specificity">
    <text>Testis.</text>
</comment>
<comment type="PTM">
    <text evidence="1">Phosphorylated by SRPK1.</text>
</comment>
<comment type="similarity">
    <text evidence="5">Belongs to the protamine P1 family.</text>
</comment>
<dbReference type="EMBL" id="Z46939">
    <property type="protein sequence ID" value="CAA87061.1"/>
    <property type="molecule type" value="Genomic_DNA"/>
</dbReference>
<dbReference type="EMBL" id="BC126070">
    <property type="protein sequence ID" value="AAI26071.1"/>
    <property type="molecule type" value="mRNA"/>
</dbReference>
<dbReference type="PIR" id="A27128">
    <property type="entry name" value="A27128"/>
</dbReference>
<dbReference type="PIR" id="S03997">
    <property type="entry name" value="S03997"/>
</dbReference>
<dbReference type="RefSeq" id="NP_001002850.1">
    <property type="nucleotide sequence ID" value="NM_001002850.2"/>
</dbReference>
<dbReference type="STRING" id="10116.ENSRNOP00000003420"/>
<dbReference type="iPTMnet" id="P10118"/>
<dbReference type="PhosphoSitePlus" id="P10118"/>
<dbReference type="PaxDb" id="10116-ENSRNOP00000003420"/>
<dbReference type="GeneID" id="24685"/>
<dbReference type="KEGG" id="rno:24685"/>
<dbReference type="UCSC" id="RGD:1583873">
    <property type="organism name" value="rat"/>
</dbReference>
<dbReference type="AGR" id="RGD:1583873"/>
<dbReference type="CTD" id="5619"/>
<dbReference type="RGD" id="1583873">
    <property type="gene designation" value="Prm1"/>
</dbReference>
<dbReference type="HOGENOM" id="CLU_214580_2_0_1"/>
<dbReference type="InParanoid" id="P10118"/>
<dbReference type="PRO" id="PR:P10118"/>
<dbReference type="Proteomes" id="UP000002494">
    <property type="component" value="Chromosome 10"/>
</dbReference>
<dbReference type="Bgee" id="ENSRNOG00000002532">
    <property type="expression patterns" value="Expressed in testis and 9 other cell types or tissues"/>
</dbReference>
<dbReference type="GO" id="GO:0001673">
    <property type="term" value="C:male germ cell nucleus"/>
    <property type="evidence" value="ECO:0000266"/>
    <property type="project" value="RGD"/>
</dbReference>
<dbReference type="GO" id="GO:0000786">
    <property type="term" value="C:nucleosome"/>
    <property type="evidence" value="ECO:0007669"/>
    <property type="project" value="UniProtKB-KW"/>
</dbReference>
<dbReference type="GO" id="GO:0005634">
    <property type="term" value="C:nucleus"/>
    <property type="evidence" value="ECO:0000266"/>
    <property type="project" value="RGD"/>
</dbReference>
<dbReference type="GO" id="GO:0003677">
    <property type="term" value="F:DNA binding"/>
    <property type="evidence" value="ECO:0007669"/>
    <property type="project" value="UniProtKB-KW"/>
</dbReference>
<dbReference type="GO" id="GO:0030261">
    <property type="term" value="P:chromosome condensation"/>
    <property type="evidence" value="ECO:0007669"/>
    <property type="project" value="UniProtKB-KW"/>
</dbReference>
<dbReference type="GO" id="GO:0006997">
    <property type="term" value="P:nucleus organization"/>
    <property type="evidence" value="ECO:0000266"/>
    <property type="project" value="RGD"/>
</dbReference>
<dbReference type="GO" id="GO:0035092">
    <property type="term" value="P:sperm DNA condensation"/>
    <property type="evidence" value="ECO:0007669"/>
    <property type="project" value="InterPro"/>
</dbReference>
<dbReference type="GO" id="GO:0007286">
    <property type="term" value="P:spermatid development"/>
    <property type="evidence" value="ECO:0000266"/>
    <property type="project" value="RGD"/>
</dbReference>
<dbReference type="InterPro" id="IPR000221">
    <property type="entry name" value="Protamine_P1"/>
</dbReference>
<dbReference type="Pfam" id="PF00260">
    <property type="entry name" value="Protamine_P1"/>
    <property type="match status" value="1"/>
</dbReference>
<dbReference type="PROSITE" id="PS00048">
    <property type="entry name" value="PROTAMINE_P1"/>
    <property type="match status" value="1"/>
</dbReference>
<evidence type="ECO:0000250" key="1"/>
<evidence type="ECO:0000250" key="2">
    <source>
        <dbReference type="UniProtKB" id="P02318"/>
    </source>
</evidence>
<evidence type="ECO:0000269" key="3">
    <source>
    </source>
</evidence>
<evidence type="ECO:0000269" key="4">
    <source>
    </source>
</evidence>
<evidence type="ECO:0000305" key="5"/>
<reference key="1">
    <citation type="journal article" date="1989" name="Biol. Chem. Hoppe-Seyler">
        <title>Nucleotide sequence of a cDNA encoding rat protamine and the haploid expression of the gene during rat spermatogenesis.</title>
        <authorList>
            <person name="Klemm U."/>
            <person name="Lee C.H."/>
            <person name="Burfeind P."/>
            <person name="Hake S."/>
            <person name="Engel W."/>
        </authorList>
    </citation>
    <scope>NUCLEOTIDE SEQUENCE [GENOMIC DNA]</scope>
</reference>
<reference key="2">
    <citation type="journal article" date="1996" name="Mol. Reprod. Dev.">
        <title>Sequence analysis of the conserved protamine gene cluster shows that it contains a fourth expressed gene.</title>
        <authorList>
            <person name="Schlueter G."/>
            <person name="Celik A.B."/>
            <person name="Obata R."/>
            <person name="Schlicker M."/>
            <person name="Hofferbert S."/>
            <person name="Schlung A."/>
            <person name="Adham I.M."/>
            <person name="Engel W."/>
        </authorList>
    </citation>
    <scope>NUCLEOTIDE SEQUENCE [GENOMIC DNA]</scope>
</reference>
<reference key="3">
    <citation type="journal article" date="2004" name="Genome Res.">
        <title>The status, quality, and expansion of the NIH full-length cDNA project: the Mammalian Gene Collection (MGC).</title>
        <authorList>
            <consortium name="The MGC Project Team"/>
        </authorList>
    </citation>
    <scope>NUCLEOTIDE SEQUENCE [LARGE SCALE MRNA]</scope>
    <source>
        <tissue>Testis</tissue>
    </source>
</reference>
<reference key="4">
    <citation type="journal article" date="1988" name="Biol. Chem. Hoppe-Seyler">
        <title>Rat sperm protamine. Isolation and sequence analysis.</title>
        <authorList>
            <person name="Ammer H."/>
            <person name="Henschen A."/>
        </authorList>
    </citation>
    <scope>PROTEIN SEQUENCE OF 2-51</scope>
</reference>
<reference key="5">
    <citation type="journal article" date="1976" name="Biochim. Biophys. Acta">
        <title>Partial structural analysis of the basic chromosomal protein of rat spermatozoa.</title>
        <authorList>
            <person name="Kistler W.S."/>
            <person name="Keim P.S."/>
            <person name="Heinrikson R.L."/>
        </authorList>
    </citation>
    <scope>PROTEIN SEQUENCE OF 2-16 AND 45-51</scope>
</reference>